<keyword id="KW-0028">Amino-acid biosynthesis</keyword>
<keyword id="KW-0963">Cytoplasm</keyword>
<keyword id="KW-0413">Isomerase</keyword>
<keyword id="KW-0486">Methionine biosynthesis</keyword>
<keyword id="KW-0539">Nucleus</keyword>
<keyword id="KW-1185">Reference proteome</keyword>
<organism>
    <name type="scientific">Clavispora lusitaniae (strain ATCC 42720)</name>
    <name type="common">Yeast</name>
    <name type="synonym">Candida lusitaniae</name>
    <dbReference type="NCBI Taxonomy" id="306902"/>
    <lineage>
        <taxon>Eukaryota</taxon>
        <taxon>Fungi</taxon>
        <taxon>Dikarya</taxon>
        <taxon>Ascomycota</taxon>
        <taxon>Saccharomycotina</taxon>
        <taxon>Pichiomycetes</taxon>
        <taxon>Metschnikowiaceae</taxon>
        <taxon>Clavispora</taxon>
    </lineage>
</organism>
<protein>
    <recommendedName>
        <fullName evidence="1">Methylthioribose-1-phosphate isomerase</fullName>
        <shortName evidence="1">M1Pi</shortName>
        <shortName evidence="1">MTR-1-P isomerase</shortName>
        <ecNumber evidence="1">5.3.1.23</ecNumber>
    </recommendedName>
    <alternativeName>
        <fullName evidence="1">S-methyl-5-thioribose-1-phosphate isomerase</fullName>
    </alternativeName>
    <alternativeName>
        <fullName evidence="1">Translation initiation factor eIF-2B subunit alpha/beta/delta-like protein</fullName>
    </alternativeName>
</protein>
<evidence type="ECO:0000255" key="1">
    <source>
        <dbReference type="HAMAP-Rule" id="MF_03119"/>
    </source>
</evidence>
<gene>
    <name evidence="1" type="primary">MRI1</name>
    <name type="ORF">CLUG_05854</name>
</gene>
<sequence length="402" mass="44574">MSKDTLEAIRFDKENVTLDILDQLLLPYESRYINIKSIQDAFEAIKSMQVRGAPAIAIVGAFAITVDTHLYLKSGETSKTVADLLNSIDYLVTSRPTAVNLANACNEIKALLVSHFEKSDLVTEKVWKLLFDYSVSLHEDDLRNNFKIGENGLRFISETLKAQNFKGPFSIVTVCNTGSLATSGHGTALGVIRTVHAQLSKSVSNEEFWFEHVYPLETRPYNQGAKLTTYELHYEKIPFTMICDNMVTSLISTLHKKKNIKGSAAPVKFIITGADRVVKNGDSANKIGTYQLAAIADFFNSTFTKEEDKIKFMVAAPNTTIDLKTETGDEIVIEERPAHELTSLKGPVLREDGSVGEKMTVGIATPGIQVWNPAFDVAPYQLIDCIVTEDEPFKKVDGKFSF</sequence>
<name>MTNA_CLAL4</name>
<proteinExistence type="inferred from homology"/>
<reference key="1">
    <citation type="journal article" date="2009" name="Nature">
        <title>Evolution of pathogenicity and sexual reproduction in eight Candida genomes.</title>
        <authorList>
            <person name="Butler G."/>
            <person name="Rasmussen M.D."/>
            <person name="Lin M.F."/>
            <person name="Santos M.A.S."/>
            <person name="Sakthikumar S."/>
            <person name="Munro C.A."/>
            <person name="Rheinbay E."/>
            <person name="Grabherr M."/>
            <person name="Forche A."/>
            <person name="Reedy J.L."/>
            <person name="Agrafioti I."/>
            <person name="Arnaud M.B."/>
            <person name="Bates S."/>
            <person name="Brown A.J.P."/>
            <person name="Brunke S."/>
            <person name="Costanzo M.C."/>
            <person name="Fitzpatrick D.A."/>
            <person name="de Groot P.W.J."/>
            <person name="Harris D."/>
            <person name="Hoyer L.L."/>
            <person name="Hube B."/>
            <person name="Klis F.M."/>
            <person name="Kodira C."/>
            <person name="Lennard N."/>
            <person name="Logue M.E."/>
            <person name="Martin R."/>
            <person name="Neiman A.M."/>
            <person name="Nikolaou E."/>
            <person name="Quail M.A."/>
            <person name="Quinn J."/>
            <person name="Santos M.C."/>
            <person name="Schmitzberger F.F."/>
            <person name="Sherlock G."/>
            <person name="Shah P."/>
            <person name="Silverstein K.A.T."/>
            <person name="Skrzypek M.S."/>
            <person name="Soll D."/>
            <person name="Staggs R."/>
            <person name="Stansfield I."/>
            <person name="Stumpf M.P.H."/>
            <person name="Sudbery P.E."/>
            <person name="Srikantha T."/>
            <person name="Zeng Q."/>
            <person name="Berman J."/>
            <person name="Berriman M."/>
            <person name="Heitman J."/>
            <person name="Gow N.A.R."/>
            <person name="Lorenz M.C."/>
            <person name="Birren B.W."/>
            <person name="Kellis M."/>
            <person name="Cuomo C.A."/>
        </authorList>
    </citation>
    <scope>NUCLEOTIDE SEQUENCE [LARGE SCALE GENOMIC DNA]</scope>
    <source>
        <strain>ATCC 42720</strain>
    </source>
</reference>
<dbReference type="EC" id="5.3.1.23" evidence="1"/>
<dbReference type="EMBL" id="CH408083">
    <property type="protein sequence ID" value="EEQ41726.1"/>
    <property type="molecule type" value="Genomic_DNA"/>
</dbReference>
<dbReference type="RefSeq" id="XP_002614368.1">
    <property type="nucleotide sequence ID" value="XM_002614322.1"/>
</dbReference>
<dbReference type="SMR" id="C4YC37"/>
<dbReference type="FunCoup" id="C4YC37">
    <property type="interactions" value="704"/>
</dbReference>
<dbReference type="STRING" id="306902.C4YC37"/>
<dbReference type="GeneID" id="8494635"/>
<dbReference type="KEGG" id="clu:CLUG_05854"/>
<dbReference type="VEuPathDB" id="FungiDB:CLUG_05854"/>
<dbReference type="HOGENOM" id="CLU_016218_1_3_1"/>
<dbReference type="InParanoid" id="C4YC37"/>
<dbReference type="OMA" id="CETRPLN"/>
<dbReference type="OrthoDB" id="88798at4891"/>
<dbReference type="UniPathway" id="UPA00904">
    <property type="reaction ID" value="UER00874"/>
</dbReference>
<dbReference type="Proteomes" id="UP000007703">
    <property type="component" value="Unassembled WGS sequence"/>
</dbReference>
<dbReference type="GO" id="GO:0005737">
    <property type="term" value="C:cytoplasm"/>
    <property type="evidence" value="ECO:0007669"/>
    <property type="project" value="UniProtKB-SubCell"/>
</dbReference>
<dbReference type="GO" id="GO:0005634">
    <property type="term" value="C:nucleus"/>
    <property type="evidence" value="ECO:0007669"/>
    <property type="project" value="UniProtKB-SubCell"/>
</dbReference>
<dbReference type="GO" id="GO:0046523">
    <property type="term" value="F:S-methyl-5-thioribose-1-phosphate isomerase activity"/>
    <property type="evidence" value="ECO:0007669"/>
    <property type="project" value="UniProtKB-UniRule"/>
</dbReference>
<dbReference type="GO" id="GO:0019509">
    <property type="term" value="P:L-methionine salvage from methylthioadenosine"/>
    <property type="evidence" value="ECO:0007669"/>
    <property type="project" value="UniProtKB-UniRule"/>
</dbReference>
<dbReference type="FunFam" id="1.20.120.420:FF:000003">
    <property type="entry name" value="Methylthioribose-1-phosphate isomerase"/>
    <property type="match status" value="1"/>
</dbReference>
<dbReference type="Gene3D" id="1.20.120.420">
    <property type="entry name" value="translation initiation factor eif-2b, domain 1"/>
    <property type="match status" value="1"/>
</dbReference>
<dbReference type="Gene3D" id="3.40.50.10470">
    <property type="entry name" value="Translation initiation factor eif-2b, domain 2"/>
    <property type="match status" value="1"/>
</dbReference>
<dbReference type="HAMAP" id="MF_01678">
    <property type="entry name" value="Salvage_MtnA"/>
    <property type="match status" value="1"/>
</dbReference>
<dbReference type="InterPro" id="IPR000649">
    <property type="entry name" value="IF-2B-related"/>
</dbReference>
<dbReference type="InterPro" id="IPR005251">
    <property type="entry name" value="IF-M1Pi"/>
</dbReference>
<dbReference type="InterPro" id="IPR042529">
    <property type="entry name" value="IF_2B-like_C"/>
</dbReference>
<dbReference type="InterPro" id="IPR011559">
    <property type="entry name" value="Initiation_fac_2B_a/b/d"/>
</dbReference>
<dbReference type="InterPro" id="IPR027363">
    <property type="entry name" value="M1Pi_N"/>
</dbReference>
<dbReference type="InterPro" id="IPR037171">
    <property type="entry name" value="NagB/RpiA_transferase-like"/>
</dbReference>
<dbReference type="NCBIfam" id="TIGR00524">
    <property type="entry name" value="eIF-2B_rel"/>
    <property type="match status" value="1"/>
</dbReference>
<dbReference type="NCBIfam" id="NF004326">
    <property type="entry name" value="PRK05720.1"/>
    <property type="match status" value="1"/>
</dbReference>
<dbReference type="NCBIfam" id="TIGR00512">
    <property type="entry name" value="salvage_mtnA"/>
    <property type="match status" value="1"/>
</dbReference>
<dbReference type="PANTHER" id="PTHR43475">
    <property type="entry name" value="METHYLTHIORIBOSE-1-PHOSPHATE ISOMERASE"/>
    <property type="match status" value="1"/>
</dbReference>
<dbReference type="PANTHER" id="PTHR43475:SF1">
    <property type="entry name" value="METHYLTHIORIBOSE-1-PHOSPHATE ISOMERASE"/>
    <property type="match status" value="1"/>
</dbReference>
<dbReference type="Pfam" id="PF01008">
    <property type="entry name" value="IF-2B"/>
    <property type="match status" value="1"/>
</dbReference>
<dbReference type="SUPFAM" id="SSF100950">
    <property type="entry name" value="NagB/RpiA/CoA transferase-like"/>
    <property type="match status" value="1"/>
</dbReference>
<accession>C4YC37</accession>
<feature type="chain" id="PRO_0000402024" description="Methylthioribose-1-phosphate isomerase">
    <location>
        <begin position="1"/>
        <end position="402"/>
    </location>
</feature>
<feature type="active site" description="Proton donor" evidence="1">
    <location>
        <position position="275"/>
    </location>
</feature>
<feature type="site" description="Transition state stabilizer" evidence="1">
    <location>
        <position position="175"/>
    </location>
</feature>
<comment type="function">
    <text evidence="1">Catalyzes the interconversion of methylthioribose-1-phosphate (MTR-1-P) into methylthioribulose-1-phosphate (MTRu-1-P).</text>
</comment>
<comment type="catalytic activity">
    <reaction evidence="1">
        <text>5-(methylsulfanyl)-alpha-D-ribose 1-phosphate = 5-(methylsulfanyl)-D-ribulose 1-phosphate</text>
        <dbReference type="Rhea" id="RHEA:19989"/>
        <dbReference type="ChEBI" id="CHEBI:58533"/>
        <dbReference type="ChEBI" id="CHEBI:58548"/>
        <dbReference type="EC" id="5.3.1.23"/>
    </reaction>
</comment>
<comment type="pathway">
    <text evidence="1">Amino-acid biosynthesis; L-methionine biosynthesis via salvage pathway; L-methionine from S-methyl-5-thio-alpha-D-ribose 1-phosphate: step 1/6.</text>
</comment>
<comment type="subcellular location">
    <subcellularLocation>
        <location evidence="1">Cytoplasm</location>
    </subcellularLocation>
    <subcellularLocation>
        <location evidence="1">Nucleus</location>
    </subcellularLocation>
</comment>
<comment type="similarity">
    <text evidence="1">Belongs to the eIF-2B alpha/beta/delta subunits family. MtnA subfamily.</text>
</comment>